<sequence length="714" mass="82209">MLSFCDYFWSEDLVSGLDVLFDRLYHGCEQCDLFIQLFASRMQFEVSHGRQLFGIEAGMDNLKAVQEDEDEGVTVSRALRGILQEMSQEGTHHLTIASNIESLVLQPFSKWCIEHRERIQYSEKTLLTNVNNFRKSKKYVGKLEKEYFNKCRQLEEFKRTHFNEDELANAMKSLKIQNKYEEDVAREKDHRFFNRIAGIDFDYKTMKETLQLLLTKLPKTDYKLPLISYSLSNTNNGGEITKFLLDHMSLKDIDQAETFGQDLLNLGFLKYCNGVGNTFVNSKKFQYQWKNTAYMFANVPMPGSEEPTTGESLISRFNNWDGSSAKEIIQSKIGNDQGAAKIQAPHISDNERTLFRMMDALAASDKKYYQECFKMDALRCSVEELLIDHLSFMEKCESDRLNAIKKATLDFCSTLGNKISSLRLCIDKMLTLENDIDPTADLLQLLVKYKTGSFKPQAIVYNNYYNPGSFQNFGVDLETRCRLDKKVVPLIISSIFSYMDKIYPDLPNDKVRTSIWTDSVKLSLTHQLRNLLNKQQFHNEGEIFDILSTSKLEPSTIASVVKIYLLELPDPLIPNDVSDILRVLYLDYPPLVETALQNSTSSPENQQDDDNEEGFDTKRIRGLYTTLSSLSKPHIATLDAITTHFYRLIKILKMGENGNEVADEFTVSISQEFANCIIQSKITDDNEIGFKIFYDLLTHKKQIFHELKRQNSKN</sequence>
<comment type="function">
    <text evidence="4">Acts in signal transduction. Activates CDC42 and RHO5.</text>
</comment>
<comment type="subunit">
    <text evidence="4">Interacts with CDC42 and RHO5.</text>
</comment>
<comment type="miscellaneous">
    <text evidence="5">Present with 1750 molecules/cell in log phase SD medium.</text>
</comment>
<proteinExistence type="evidence at protein level"/>
<gene>
    <name type="primary">RGD2</name>
    <name type="ordered locus">YFL047W</name>
</gene>
<reference key="1">
    <citation type="journal article" date="1995" name="Nat. Genet.">
        <title>Analysis of the nucleotide sequence of chromosome VI from Saccharomyces cerevisiae.</title>
        <authorList>
            <person name="Murakami Y."/>
            <person name="Naitou M."/>
            <person name="Hagiwara H."/>
            <person name="Shibata T."/>
            <person name="Ozawa M."/>
            <person name="Sasanuma S."/>
            <person name="Sasanuma M."/>
            <person name="Tsuchiya Y."/>
            <person name="Soeda E."/>
            <person name="Yokoyama K."/>
            <person name="Yamazaki M."/>
            <person name="Tashiro H."/>
            <person name="Eki T."/>
        </authorList>
    </citation>
    <scope>NUCLEOTIDE SEQUENCE [LARGE SCALE GENOMIC DNA]</scope>
    <source>
        <strain>ATCC 204508 / S288c</strain>
    </source>
</reference>
<reference key="2">
    <citation type="journal article" date="2014" name="G3 (Bethesda)">
        <title>The reference genome sequence of Saccharomyces cerevisiae: Then and now.</title>
        <authorList>
            <person name="Engel S.R."/>
            <person name="Dietrich F.S."/>
            <person name="Fisk D.G."/>
            <person name="Binkley G."/>
            <person name="Balakrishnan R."/>
            <person name="Costanzo M.C."/>
            <person name="Dwight S.S."/>
            <person name="Hitz B.C."/>
            <person name="Karra K."/>
            <person name="Nash R.S."/>
            <person name="Weng S."/>
            <person name="Wong E.D."/>
            <person name="Lloyd P."/>
            <person name="Skrzypek M.S."/>
            <person name="Miyasato S.R."/>
            <person name="Simison M."/>
            <person name="Cherry J.M."/>
        </authorList>
    </citation>
    <scope>GENOME REANNOTATION</scope>
    <source>
        <strain>ATCC 204508 / S288c</strain>
    </source>
</reference>
<reference key="3">
    <citation type="journal article" date="2001" name="FEBS Lett.">
        <title>Functional characterization of the Bag7, Lrg1 and Rgd2 RhoGAP proteins from Saccharomyces cerevisiae.</title>
        <authorList>
            <person name="Roumanie O."/>
            <person name="Weinachter C."/>
            <person name="Larrieu I."/>
            <person name="Crouzet M."/>
            <person name="Doignon F."/>
        </authorList>
    </citation>
    <scope>FUNCTION</scope>
    <scope>INTERACTION WITH CDC42 AND RHO5</scope>
</reference>
<reference key="4">
    <citation type="journal article" date="2003" name="Nature">
        <title>Global analysis of protein expression in yeast.</title>
        <authorList>
            <person name="Ghaemmaghami S."/>
            <person name="Huh W.-K."/>
            <person name="Bower K."/>
            <person name="Howson R.W."/>
            <person name="Belle A."/>
            <person name="Dephoure N."/>
            <person name="O'Shea E.K."/>
            <person name="Weissman J.S."/>
        </authorList>
    </citation>
    <scope>LEVEL OF PROTEIN EXPRESSION [LARGE SCALE ANALYSIS]</scope>
</reference>
<protein>
    <recommendedName>
        <fullName>Rho-GTPase-activating protein RGD2</fullName>
    </recommendedName>
</protein>
<keyword id="KW-0175">Coiled coil</keyword>
<keyword id="KW-0343">GTPase activation</keyword>
<keyword id="KW-1185">Reference proteome</keyword>
<feature type="chain" id="PRO_0000097318" description="Rho-GTPase-activating protein RGD2">
    <location>
        <begin position="1"/>
        <end position="714"/>
    </location>
</feature>
<feature type="domain" description="F-BAR" evidence="3">
    <location>
        <begin position="2"/>
        <end position="441"/>
    </location>
</feature>
<feature type="domain" description="DEP" evidence="1">
    <location>
        <begin position="218"/>
        <end position="298"/>
    </location>
</feature>
<feature type="domain" description="Rho-GAP" evidence="2">
    <location>
        <begin position="475"/>
        <end position="704"/>
    </location>
</feature>
<feature type="site" description="Arginine finger; crucial for GTP hydrolysis by stabilizing the transition state" evidence="2">
    <location>
        <position position="517"/>
    </location>
</feature>
<organism>
    <name type="scientific">Saccharomyces cerevisiae (strain ATCC 204508 / S288c)</name>
    <name type="common">Baker's yeast</name>
    <dbReference type="NCBI Taxonomy" id="559292"/>
    <lineage>
        <taxon>Eukaryota</taxon>
        <taxon>Fungi</taxon>
        <taxon>Dikarya</taxon>
        <taxon>Ascomycota</taxon>
        <taxon>Saccharomycotina</taxon>
        <taxon>Saccharomycetes</taxon>
        <taxon>Saccharomycetales</taxon>
        <taxon>Saccharomycetaceae</taxon>
        <taxon>Saccharomyces</taxon>
    </lineage>
</organism>
<dbReference type="EMBL" id="D50617">
    <property type="protein sequence ID" value="BAA09194.1"/>
    <property type="molecule type" value="Genomic_DNA"/>
</dbReference>
<dbReference type="EMBL" id="BK006940">
    <property type="protein sequence ID" value="DAA12393.1"/>
    <property type="molecule type" value="Genomic_DNA"/>
</dbReference>
<dbReference type="PIR" id="S56208">
    <property type="entry name" value="S56208"/>
</dbReference>
<dbReference type="RefSeq" id="NP_428268.1">
    <property type="nucleotide sequence ID" value="NM_001179920.1"/>
</dbReference>
<dbReference type="SMR" id="P43556"/>
<dbReference type="BioGRID" id="31100">
    <property type="interactions" value="77"/>
</dbReference>
<dbReference type="DIP" id="DIP-4958N"/>
<dbReference type="FunCoup" id="P43556">
    <property type="interactions" value="87"/>
</dbReference>
<dbReference type="IntAct" id="P43556">
    <property type="interactions" value="23"/>
</dbReference>
<dbReference type="MINT" id="P43556"/>
<dbReference type="STRING" id="4932.YFL047W"/>
<dbReference type="iPTMnet" id="P43556"/>
<dbReference type="PaxDb" id="4932-YFL047W"/>
<dbReference type="PeptideAtlas" id="P43556"/>
<dbReference type="EnsemblFungi" id="YFL047W_mRNA">
    <property type="protein sequence ID" value="YFL047W"/>
    <property type="gene ID" value="YFL047W"/>
</dbReference>
<dbReference type="GeneID" id="850497"/>
<dbReference type="KEGG" id="sce:YFL047W"/>
<dbReference type="AGR" id="SGD:S000001847"/>
<dbReference type="SGD" id="S000001847">
    <property type="gene designation" value="RGD2"/>
</dbReference>
<dbReference type="VEuPathDB" id="FungiDB:YFL047W"/>
<dbReference type="eggNOG" id="ENOG502QQWB">
    <property type="taxonomic scope" value="Eukaryota"/>
</dbReference>
<dbReference type="HOGENOM" id="CLU_008201_1_0_1"/>
<dbReference type="InParanoid" id="P43556"/>
<dbReference type="OMA" id="RKTWIYE"/>
<dbReference type="OrthoDB" id="2155291at2759"/>
<dbReference type="BioCyc" id="YEAST:G3O-30418-MONOMER"/>
<dbReference type="Reactome" id="R-SCE-8856828">
    <property type="pathway name" value="Clathrin-mediated endocytosis"/>
</dbReference>
<dbReference type="BioGRID-ORCS" id="850497">
    <property type="hits" value="6 hits in 10 CRISPR screens"/>
</dbReference>
<dbReference type="PRO" id="PR:P43556"/>
<dbReference type="Proteomes" id="UP000002311">
    <property type="component" value="Chromosome VI"/>
</dbReference>
<dbReference type="RNAct" id="P43556">
    <property type="molecule type" value="protein"/>
</dbReference>
<dbReference type="GO" id="GO:0032153">
    <property type="term" value="C:cell division site"/>
    <property type="evidence" value="ECO:0000318"/>
    <property type="project" value="GO_Central"/>
</dbReference>
<dbReference type="GO" id="GO:0005935">
    <property type="term" value="C:cellular bud neck"/>
    <property type="evidence" value="ECO:0007005"/>
    <property type="project" value="SGD"/>
</dbReference>
<dbReference type="GO" id="GO:0005934">
    <property type="term" value="C:cellular bud tip"/>
    <property type="evidence" value="ECO:0007005"/>
    <property type="project" value="SGD"/>
</dbReference>
<dbReference type="GO" id="GO:0005737">
    <property type="term" value="C:cytoplasm"/>
    <property type="evidence" value="ECO:0007005"/>
    <property type="project" value="SGD"/>
</dbReference>
<dbReference type="GO" id="GO:0000935">
    <property type="term" value="C:division septum"/>
    <property type="evidence" value="ECO:0000318"/>
    <property type="project" value="GO_Central"/>
</dbReference>
<dbReference type="GO" id="GO:0005096">
    <property type="term" value="F:GTPase activator activity"/>
    <property type="evidence" value="ECO:0000314"/>
    <property type="project" value="SGD"/>
</dbReference>
<dbReference type="GO" id="GO:0007010">
    <property type="term" value="P:cytoskeleton organization"/>
    <property type="evidence" value="ECO:0000318"/>
    <property type="project" value="GO_Central"/>
</dbReference>
<dbReference type="GO" id="GO:0007264">
    <property type="term" value="P:small GTPase-mediated signal transduction"/>
    <property type="evidence" value="ECO:0000353"/>
    <property type="project" value="SGD"/>
</dbReference>
<dbReference type="CDD" id="cd04436">
    <property type="entry name" value="DEP_fRgd2"/>
    <property type="match status" value="1"/>
</dbReference>
<dbReference type="CDD" id="cd04399">
    <property type="entry name" value="RhoGAP_fRGD2"/>
    <property type="match status" value="1"/>
</dbReference>
<dbReference type="FunFam" id="1.10.555.10:FF:000060">
    <property type="entry name" value="Rho-GTPase-activating protein RGD2"/>
    <property type="match status" value="1"/>
</dbReference>
<dbReference type="FunFam" id="1.20.1270.60:FF:000108">
    <property type="entry name" value="Rho-GTPase-activating protein RGD2"/>
    <property type="match status" value="1"/>
</dbReference>
<dbReference type="FunFam" id="1.20.1270.60:FF:000109">
    <property type="entry name" value="Rho-GTPase-activating protein RGD2"/>
    <property type="match status" value="1"/>
</dbReference>
<dbReference type="Gene3D" id="1.20.1270.60">
    <property type="entry name" value="Arfaptin homology (AH) domain/BAR domain"/>
    <property type="match status" value="2"/>
</dbReference>
<dbReference type="Gene3D" id="1.10.555.10">
    <property type="entry name" value="Rho GTPase activation protein"/>
    <property type="match status" value="1"/>
</dbReference>
<dbReference type="InterPro" id="IPR027267">
    <property type="entry name" value="AH/BAR_dom_sf"/>
</dbReference>
<dbReference type="InterPro" id="IPR000591">
    <property type="entry name" value="DEP_dom"/>
</dbReference>
<dbReference type="InterPro" id="IPR031160">
    <property type="entry name" value="F_BAR"/>
</dbReference>
<dbReference type="InterPro" id="IPR001060">
    <property type="entry name" value="FCH_dom"/>
</dbReference>
<dbReference type="InterPro" id="IPR008936">
    <property type="entry name" value="Rho_GTPase_activation_prot"/>
</dbReference>
<dbReference type="InterPro" id="IPR000198">
    <property type="entry name" value="RhoGAP_dom"/>
</dbReference>
<dbReference type="PANTHER" id="PTHR23065">
    <property type="entry name" value="PROLINE-SERINE-THREONINE PHOSPHATASE INTERACTING PROTEIN 1"/>
    <property type="match status" value="1"/>
</dbReference>
<dbReference type="PANTHER" id="PTHR23065:SF17">
    <property type="entry name" value="RHO-GTPASE-ACTIVATING PROTEIN RGD2"/>
    <property type="match status" value="1"/>
</dbReference>
<dbReference type="Pfam" id="PF00610">
    <property type="entry name" value="DEP"/>
    <property type="match status" value="1"/>
</dbReference>
<dbReference type="Pfam" id="PF00611">
    <property type="entry name" value="FCH"/>
    <property type="match status" value="1"/>
</dbReference>
<dbReference type="Pfam" id="PF00620">
    <property type="entry name" value="RhoGAP"/>
    <property type="match status" value="1"/>
</dbReference>
<dbReference type="SMART" id="SM00049">
    <property type="entry name" value="DEP"/>
    <property type="match status" value="1"/>
</dbReference>
<dbReference type="SMART" id="SM00055">
    <property type="entry name" value="FCH"/>
    <property type="match status" value="1"/>
</dbReference>
<dbReference type="SMART" id="SM00324">
    <property type="entry name" value="RhoGAP"/>
    <property type="match status" value="1"/>
</dbReference>
<dbReference type="SUPFAM" id="SSF103657">
    <property type="entry name" value="BAR/IMD domain-like"/>
    <property type="match status" value="2"/>
</dbReference>
<dbReference type="SUPFAM" id="SSF48350">
    <property type="entry name" value="GTPase activation domain, GAP"/>
    <property type="match status" value="1"/>
</dbReference>
<dbReference type="PROSITE" id="PS50186">
    <property type="entry name" value="DEP"/>
    <property type="match status" value="1"/>
</dbReference>
<dbReference type="PROSITE" id="PS51741">
    <property type="entry name" value="F_BAR"/>
    <property type="match status" value="1"/>
</dbReference>
<dbReference type="PROSITE" id="PS50238">
    <property type="entry name" value="RHOGAP"/>
    <property type="match status" value="1"/>
</dbReference>
<accession>P43556</accession>
<accession>D6VTI3</accession>
<name>RGD2_YEAST</name>
<evidence type="ECO:0000255" key="1">
    <source>
        <dbReference type="PROSITE-ProRule" id="PRU00066"/>
    </source>
</evidence>
<evidence type="ECO:0000255" key="2">
    <source>
        <dbReference type="PROSITE-ProRule" id="PRU00172"/>
    </source>
</evidence>
<evidence type="ECO:0000255" key="3">
    <source>
        <dbReference type="PROSITE-ProRule" id="PRU01077"/>
    </source>
</evidence>
<evidence type="ECO:0000269" key="4">
    <source>
    </source>
</evidence>
<evidence type="ECO:0000269" key="5">
    <source>
    </source>
</evidence>